<sequence length="208" mass="22802">MNRMFDLVLGTGNAKKLVELRMMLPEETIALTALSEIENAIDVVEDGETFSANAAKKATEQAKHLERWVLAEDSGLSVDALKGAPGVYSARYAGTHGDDEANNEKLLRELTDVPMDRRGAQFNCHLCLSDPDGNVRLAESGICRGRIATERSGGAGFGYDPLFVIPEYHKTFGELNLTVKRALSHRSRALRLFIPQLLRLVQSNSTSA</sequence>
<accession>Q7UGM3</accession>
<protein>
    <recommendedName>
        <fullName evidence="1">dITP/XTP pyrophosphatase</fullName>
        <ecNumber evidence="1">3.6.1.66</ecNumber>
    </recommendedName>
    <alternativeName>
        <fullName evidence="1">Non-canonical purine NTP pyrophosphatase</fullName>
    </alternativeName>
    <alternativeName>
        <fullName evidence="1">Non-standard purine NTP pyrophosphatase</fullName>
    </alternativeName>
    <alternativeName>
        <fullName evidence="1">Nucleoside-triphosphate diphosphatase</fullName>
    </alternativeName>
    <alternativeName>
        <fullName evidence="1">Nucleoside-triphosphate pyrophosphatase</fullName>
        <shortName evidence="1">NTPase</shortName>
    </alternativeName>
</protein>
<reference key="1">
    <citation type="journal article" date="2003" name="Proc. Natl. Acad. Sci. U.S.A.">
        <title>Complete genome sequence of the marine planctomycete Pirellula sp. strain 1.</title>
        <authorList>
            <person name="Gloeckner F.O."/>
            <person name="Kube M."/>
            <person name="Bauer M."/>
            <person name="Teeling H."/>
            <person name="Lombardot T."/>
            <person name="Ludwig W."/>
            <person name="Gade D."/>
            <person name="Beck A."/>
            <person name="Borzym K."/>
            <person name="Heitmann K."/>
            <person name="Rabus R."/>
            <person name="Schlesner H."/>
            <person name="Amann R."/>
            <person name="Reinhardt R."/>
        </authorList>
    </citation>
    <scope>NUCLEOTIDE SEQUENCE [LARGE SCALE GENOMIC DNA]</scope>
    <source>
        <strain>DSM 10527 / NCIMB 13988 / SH1</strain>
    </source>
</reference>
<proteinExistence type="inferred from homology"/>
<name>IXTPA_RHOBA</name>
<gene>
    <name type="ordered locus">RB5134</name>
</gene>
<feature type="chain" id="PRO_0000178219" description="dITP/XTP pyrophosphatase">
    <location>
        <begin position="1"/>
        <end position="208"/>
    </location>
</feature>
<feature type="active site" description="Proton acceptor" evidence="1">
    <location>
        <position position="73"/>
    </location>
</feature>
<feature type="binding site" evidence="1">
    <location>
        <begin position="11"/>
        <end position="16"/>
    </location>
    <ligand>
        <name>substrate</name>
    </ligand>
</feature>
<feature type="binding site" evidence="1">
    <location>
        <position position="73"/>
    </location>
    <ligand>
        <name>Mg(2+)</name>
        <dbReference type="ChEBI" id="CHEBI:18420"/>
    </ligand>
</feature>
<feature type="binding site" evidence="1">
    <location>
        <position position="74"/>
    </location>
    <ligand>
        <name>substrate</name>
    </ligand>
</feature>
<feature type="binding site" evidence="1">
    <location>
        <begin position="157"/>
        <end position="160"/>
    </location>
    <ligand>
        <name>substrate</name>
    </ligand>
</feature>
<feature type="binding site" evidence="1">
    <location>
        <position position="180"/>
    </location>
    <ligand>
        <name>substrate</name>
    </ligand>
</feature>
<feature type="binding site" evidence="1">
    <location>
        <begin position="185"/>
        <end position="186"/>
    </location>
    <ligand>
        <name>substrate</name>
    </ligand>
</feature>
<keyword id="KW-0378">Hydrolase</keyword>
<keyword id="KW-0460">Magnesium</keyword>
<keyword id="KW-0479">Metal-binding</keyword>
<keyword id="KW-0546">Nucleotide metabolism</keyword>
<keyword id="KW-0547">Nucleotide-binding</keyword>
<keyword id="KW-1185">Reference proteome</keyword>
<organism>
    <name type="scientific">Rhodopirellula baltica (strain DSM 10527 / NCIMB 13988 / SH1)</name>
    <dbReference type="NCBI Taxonomy" id="243090"/>
    <lineage>
        <taxon>Bacteria</taxon>
        <taxon>Pseudomonadati</taxon>
        <taxon>Planctomycetota</taxon>
        <taxon>Planctomycetia</taxon>
        <taxon>Pirellulales</taxon>
        <taxon>Pirellulaceae</taxon>
        <taxon>Rhodopirellula</taxon>
    </lineage>
</organism>
<evidence type="ECO:0000255" key="1">
    <source>
        <dbReference type="HAMAP-Rule" id="MF_01405"/>
    </source>
</evidence>
<comment type="function">
    <text evidence="1">Pyrophosphatase that catalyzes the hydrolysis of nucleoside triphosphates to their monophosphate derivatives, with a high preference for the non-canonical purine nucleotides XTP (xanthosine triphosphate), dITP (deoxyinosine triphosphate) and ITP. Seems to function as a house-cleaning enzyme that removes non-canonical purine nucleotides from the nucleotide pool, thus preventing their incorporation into DNA/RNA and avoiding chromosomal lesions.</text>
</comment>
<comment type="catalytic activity">
    <reaction evidence="1">
        <text>XTP + H2O = XMP + diphosphate + H(+)</text>
        <dbReference type="Rhea" id="RHEA:28610"/>
        <dbReference type="ChEBI" id="CHEBI:15377"/>
        <dbReference type="ChEBI" id="CHEBI:15378"/>
        <dbReference type="ChEBI" id="CHEBI:33019"/>
        <dbReference type="ChEBI" id="CHEBI:57464"/>
        <dbReference type="ChEBI" id="CHEBI:61314"/>
        <dbReference type="EC" id="3.6.1.66"/>
    </reaction>
</comment>
<comment type="catalytic activity">
    <reaction evidence="1">
        <text>dITP + H2O = dIMP + diphosphate + H(+)</text>
        <dbReference type="Rhea" id="RHEA:28342"/>
        <dbReference type="ChEBI" id="CHEBI:15377"/>
        <dbReference type="ChEBI" id="CHEBI:15378"/>
        <dbReference type="ChEBI" id="CHEBI:33019"/>
        <dbReference type="ChEBI" id="CHEBI:61194"/>
        <dbReference type="ChEBI" id="CHEBI:61382"/>
        <dbReference type="EC" id="3.6.1.66"/>
    </reaction>
</comment>
<comment type="catalytic activity">
    <reaction evidence="1">
        <text>ITP + H2O = IMP + diphosphate + H(+)</text>
        <dbReference type="Rhea" id="RHEA:29399"/>
        <dbReference type="ChEBI" id="CHEBI:15377"/>
        <dbReference type="ChEBI" id="CHEBI:15378"/>
        <dbReference type="ChEBI" id="CHEBI:33019"/>
        <dbReference type="ChEBI" id="CHEBI:58053"/>
        <dbReference type="ChEBI" id="CHEBI:61402"/>
        <dbReference type="EC" id="3.6.1.66"/>
    </reaction>
</comment>
<comment type="cofactor">
    <cofactor evidence="1">
        <name>Mg(2+)</name>
        <dbReference type="ChEBI" id="CHEBI:18420"/>
    </cofactor>
    <text evidence="1">Binds 1 Mg(2+) ion per subunit.</text>
</comment>
<comment type="subunit">
    <text evidence="1">Homodimer.</text>
</comment>
<comment type="similarity">
    <text evidence="1">Belongs to the HAM1 NTPase family.</text>
</comment>
<dbReference type="EC" id="3.6.1.66" evidence="1"/>
<dbReference type="EMBL" id="BX294141">
    <property type="protein sequence ID" value="CAD78306.1"/>
    <property type="molecule type" value="Genomic_DNA"/>
</dbReference>
<dbReference type="RefSeq" id="NP_866525.1">
    <property type="nucleotide sequence ID" value="NC_005027.1"/>
</dbReference>
<dbReference type="SMR" id="Q7UGM3"/>
<dbReference type="FunCoup" id="Q7UGM3">
    <property type="interactions" value="510"/>
</dbReference>
<dbReference type="STRING" id="243090.RB5134"/>
<dbReference type="EnsemblBacteria" id="CAD78306">
    <property type="protein sequence ID" value="CAD78306"/>
    <property type="gene ID" value="RB5134"/>
</dbReference>
<dbReference type="KEGG" id="rba:RB5134"/>
<dbReference type="PATRIC" id="fig|243090.15.peg.2454"/>
<dbReference type="eggNOG" id="COG0127">
    <property type="taxonomic scope" value="Bacteria"/>
</dbReference>
<dbReference type="HOGENOM" id="CLU_082080_0_2_0"/>
<dbReference type="InParanoid" id="Q7UGM3"/>
<dbReference type="OrthoDB" id="9807456at2"/>
<dbReference type="Proteomes" id="UP000001025">
    <property type="component" value="Chromosome"/>
</dbReference>
<dbReference type="GO" id="GO:0005737">
    <property type="term" value="C:cytoplasm"/>
    <property type="evidence" value="ECO:0000318"/>
    <property type="project" value="GO_Central"/>
</dbReference>
<dbReference type="GO" id="GO:0005829">
    <property type="term" value="C:cytosol"/>
    <property type="evidence" value="ECO:0000318"/>
    <property type="project" value="GO_Central"/>
</dbReference>
<dbReference type="GO" id="GO:0035870">
    <property type="term" value="F:dITP diphosphatase activity"/>
    <property type="evidence" value="ECO:0007669"/>
    <property type="project" value="RHEA"/>
</dbReference>
<dbReference type="GO" id="GO:0036220">
    <property type="term" value="F:ITP diphosphatase activity"/>
    <property type="evidence" value="ECO:0007669"/>
    <property type="project" value="UniProtKB-EC"/>
</dbReference>
<dbReference type="GO" id="GO:0046872">
    <property type="term" value="F:metal ion binding"/>
    <property type="evidence" value="ECO:0007669"/>
    <property type="project" value="UniProtKB-KW"/>
</dbReference>
<dbReference type="GO" id="GO:0047429">
    <property type="term" value="F:nucleoside triphosphate diphosphatase activity"/>
    <property type="evidence" value="ECO:0000318"/>
    <property type="project" value="GO_Central"/>
</dbReference>
<dbReference type="GO" id="GO:0000166">
    <property type="term" value="F:nucleotide binding"/>
    <property type="evidence" value="ECO:0007669"/>
    <property type="project" value="UniProtKB-KW"/>
</dbReference>
<dbReference type="GO" id="GO:0017111">
    <property type="term" value="F:ribonucleoside triphosphate phosphatase activity"/>
    <property type="evidence" value="ECO:0007669"/>
    <property type="project" value="InterPro"/>
</dbReference>
<dbReference type="GO" id="GO:0036222">
    <property type="term" value="F:XTP diphosphatase activity"/>
    <property type="evidence" value="ECO:0007669"/>
    <property type="project" value="RHEA"/>
</dbReference>
<dbReference type="GO" id="GO:0009143">
    <property type="term" value="P:nucleoside triphosphate catabolic process"/>
    <property type="evidence" value="ECO:0000318"/>
    <property type="project" value="GO_Central"/>
</dbReference>
<dbReference type="GO" id="GO:0009117">
    <property type="term" value="P:nucleotide metabolic process"/>
    <property type="evidence" value="ECO:0007669"/>
    <property type="project" value="UniProtKB-KW"/>
</dbReference>
<dbReference type="GO" id="GO:0009146">
    <property type="term" value="P:purine nucleoside triphosphate catabolic process"/>
    <property type="evidence" value="ECO:0007669"/>
    <property type="project" value="UniProtKB-UniRule"/>
</dbReference>
<dbReference type="CDD" id="cd00515">
    <property type="entry name" value="HAM1"/>
    <property type="match status" value="1"/>
</dbReference>
<dbReference type="FunFam" id="3.90.950.10:FF:000001">
    <property type="entry name" value="dITP/XTP pyrophosphatase"/>
    <property type="match status" value="1"/>
</dbReference>
<dbReference type="Gene3D" id="3.90.950.10">
    <property type="match status" value="1"/>
</dbReference>
<dbReference type="HAMAP" id="MF_01405">
    <property type="entry name" value="Non_canon_purine_NTPase"/>
    <property type="match status" value="1"/>
</dbReference>
<dbReference type="InterPro" id="IPR020922">
    <property type="entry name" value="dITP/XTP_pyrophosphatase"/>
</dbReference>
<dbReference type="InterPro" id="IPR029001">
    <property type="entry name" value="ITPase-like_fam"/>
</dbReference>
<dbReference type="InterPro" id="IPR002637">
    <property type="entry name" value="RdgB/HAM1"/>
</dbReference>
<dbReference type="NCBIfam" id="TIGR00042">
    <property type="entry name" value="RdgB/HAM1 family non-canonical purine NTP pyrophosphatase"/>
    <property type="match status" value="1"/>
</dbReference>
<dbReference type="PANTHER" id="PTHR11067:SF9">
    <property type="entry name" value="INOSINE TRIPHOSPHATE PYROPHOSPHATASE"/>
    <property type="match status" value="1"/>
</dbReference>
<dbReference type="PANTHER" id="PTHR11067">
    <property type="entry name" value="INOSINE TRIPHOSPHATE PYROPHOSPHATASE/HAM1 PROTEIN"/>
    <property type="match status" value="1"/>
</dbReference>
<dbReference type="Pfam" id="PF01725">
    <property type="entry name" value="Ham1p_like"/>
    <property type="match status" value="1"/>
</dbReference>
<dbReference type="SUPFAM" id="SSF52972">
    <property type="entry name" value="ITPase-like"/>
    <property type="match status" value="1"/>
</dbReference>